<name>LDHD_STAAS</name>
<evidence type="ECO:0000250" key="1">
    <source>
        <dbReference type="UniProtKB" id="P26297"/>
    </source>
</evidence>
<evidence type="ECO:0000250" key="2">
    <source>
        <dbReference type="UniProtKB" id="P30901"/>
    </source>
</evidence>
<evidence type="ECO:0000305" key="3"/>
<feature type="chain" id="PRO_0000075963" description="D-lactate dehydrogenase">
    <location>
        <begin position="1"/>
        <end position="330"/>
    </location>
</feature>
<feature type="active site" evidence="1">
    <location>
        <position position="235"/>
    </location>
</feature>
<feature type="active site" evidence="1">
    <location>
        <position position="264"/>
    </location>
</feature>
<feature type="active site" description="Proton donor" evidence="1">
    <location>
        <position position="296"/>
    </location>
</feature>
<feature type="binding site" evidence="2">
    <location>
        <begin position="156"/>
        <end position="157"/>
    </location>
    <ligand>
        <name>NAD(+)</name>
        <dbReference type="ChEBI" id="CHEBI:57540"/>
    </ligand>
</feature>
<feature type="binding site" evidence="1">
    <location>
        <position position="176"/>
    </location>
    <ligand>
        <name>NAD(+)</name>
        <dbReference type="ChEBI" id="CHEBI:57540"/>
    </ligand>
</feature>
<feature type="binding site" evidence="2">
    <location>
        <begin position="206"/>
        <end position="207"/>
    </location>
    <ligand>
        <name>NAD(+)</name>
        <dbReference type="ChEBI" id="CHEBI:57540"/>
    </ligand>
</feature>
<feature type="binding site" evidence="2">
    <location>
        <begin position="233"/>
        <end position="235"/>
    </location>
    <ligand>
        <name>NAD(+)</name>
        <dbReference type="ChEBI" id="CHEBI:57540"/>
    </ligand>
</feature>
<feature type="binding site" evidence="2">
    <location>
        <position position="259"/>
    </location>
    <ligand>
        <name>NAD(+)</name>
        <dbReference type="ChEBI" id="CHEBI:57540"/>
    </ligand>
</feature>
<sequence length="330" mass="36713">MTKIMFFGTRDYEKEMALNWGKKNNVEVTTSKELLSSATVDQLKDYDGVTTMQFGKLEDDVYPKLESYGIKQIAQRTAGFDMYDLDLAKKHNIVISNVPSYSPETIAEYSVSIALQLVRRFPDIERRVQAHDFTWQAEIMSKPVKNMTVAIIGTGRIGAATAKIYAGFGATITAYDAYPNKDLDFLTYKDSVKEAIKDADIISLHVPANKESYHLFDKAMFDHVKKGAILVNAARGAVINTPDLIAAVNDGTLLGAAIDTYENEAAYFTNDWTNKDIDDKTLLELIEHERILVTPHIAFFSDEAVQNLVEGGLNAALSVINTSTCETRLN</sequence>
<accession>Q6G6F1</accession>
<keyword id="KW-0520">NAD</keyword>
<keyword id="KW-0560">Oxidoreductase</keyword>
<organism>
    <name type="scientific">Staphylococcus aureus (strain MSSA476)</name>
    <dbReference type="NCBI Taxonomy" id="282459"/>
    <lineage>
        <taxon>Bacteria</taxon>
        <taxon>Bacillati</taxon>
        <taxon>Bacillota</taxon>
        <taxon>Bacilli</taxon>
        <taxon>Bacillales</taxon>
        <taxon>Staphylococcaceae</taxon>
        <taxon>Staphylococcus</taxon>
    </lineage>
</organism>
<protein>
    <recommendedName>
        <fullName>D-lactate dehydrogenase</fullName>
        <shortName>D-LDH</shortName>
        <ecNumber>1.1.1.28</ecNumber>
    </recommendedName>
    <alternativeName>
        <fullName>D-specific 2-hydroxyacid dehydrogenase</fullName>
    </alternativeName>
</protein>
<reference key="1">
    <citation type="journal article" date="2004" name="Proc. Natl. Acad. Sci. U.S.A.">
        <title>Complete genomes of two clinical Staphylococcus aureus strains: evidence for the rapid evolution of virulence and drug resistance.</title>
        <authorList>
            <person name="Holden M.T.G."/>
            <person name="Feil E.J."/>
            <person name="Lindsay J.A."/>
            <person name="Peacock S.J."/>
            <person name="Day N.P.J."/>
            <person name="Enright M.C."/>
            <person name="Foster T.J."/>
            <person name="Moore C.E."/>
            <person name="Hurst L."/>
            <person name="Atkin R."/>
            <person name="Barron A."/>
            <person name="Bason N."/>
            <person name="Bentley S.D."/>
            <person name="Chillingworth C."/>
            <person name="Chillingworth T."/>
            <person name="Churcher C."/>
            <person name="Clark L."/>
            <person name="Corton C."/>
            <person name="Cronin A."/>
            <person name="Doggett J."/>
            <person name="Dowd L."/>
            <person name="Feltwell T."/>
            <person name="Hance Z."/>
            <person name="Harris B."/>
            <person name="Hauser H."/>
            <person name="Holroyd S."/>
            <person name="Jagels K."/>
            <person name="James K.D."/>
            <person name="Lennard N."/>
            <person name="Line A."/>
            <person name="Mayes R."/>
            <person name="Moule S."/>
            <person name="Mungall K."/>
            <person name="Ormond D."/>
            <person name="Quail M.A."/>
            <person name="Rabbinowitsch E."/>
            <person name="Rutherford K.M."/>
            <person name="Sanders M."/>
            <person name="Sharp S."/>
            <person name="Simmonds M."/>
            <person name="Stevens K."/>
            <person name="Whitehead S."/>
            <person name="Barrell B.G."/>
            <person name="Spratt B.G."/>
            <person name="Parkhill J."/>
        </authorList>
    </citation>
    <scope>NUCLEOTIDE SEQUENCE [LARGE SCALE GENOMIC DNA]</scope>
    <source>
        <strain>MSSA476</strain>
    </source>
</reference>
<dbReference type="EC" id="1.1.1.28"/>
<dbReference type="EMBL" id="BX571857">
    <property type="protein sequence ID" value="CAG44225.1"/>
    <property type="molecule type" value="Genomic_DNA"/>
</dbReference>
<dbReference type="RefSeq" id="WP_000161533.1">
    <property type="nucleotide sequence ID" value="NC_002953.3"/>
</dbReference>
<dbReference type="SMR" id="Q6G6F1"/>
<dbReference type="KEGG" id="sas:SAS2410"/>
<dbReference type="HOGENOM" id="CLU_019796_1_1_9"/>
<dbReference type="GO" id="GO:0008720">
    <property type="term" value="F:D-lactate dehydrogenase activity"/>
    <property type="evidence" value="ECO:0007669"/>
    <property type="project" value="UniProtKB-EC"/>
</dbReference>
<dbReference type="GO" id="GO:0051287">
    <property type="term" value="F:NAD binding"/>
    <property type="evidence" value="ECO:0007669"/>
    <property type="project" value="InterPro"/>
</dbReference>
<dbReference type="CDD" id="cd12186">
    <property type="entry name" value="LDH"/>
    <property type="match status" value="1"/>
</dbReference>
<dbReference type="Gene3D" id="3.40.50.720">
    <property type="entry name" value="NAD(P)-binding Rossmann-like Domain"/>
    <property type="match status" value="2"/>
</dbReference>
<dbReference type="InterPro" id="IPR006139">
    <property type="entry name" value="D-isomer_2_OHA_DH_cat_dom"/>
</dbReference>
<dbReference type="InterPro" id="IPR029753">
    <property type="entry name" value="D-isomer_DH_CS"/>
</dbReference>
<dbReference type="InterPro" id="IPR029752">
    <property type="entry name" value="D-isomer_DH_CS1"/>
</dbReference>
<dbReference type="InterPro" id="IPR006140">
    <property type="entry name" value="D-isomer_DH_NAD-bd"/>
</dbReference>
<dbReference type="InterPro" id="IPR036291">
    <property type="entry name" value="NAD(P)-bd_dom_sf"/>
</dbReference>
<dbReference type="NCBIfam" id="NF006374">
    <property type="entry name" value="PRK08605.1"/>
    <property type="match status" value="1"/>
</dbReference>
<dbReference type="NCBIfam" id="NF009127">
    <property type="entry name" value="PRK12480.1"/>
    <property type="match status" value="1"/>
</dbReference>
<dbReference type="PANTHER" id="PTHR43026">
    <property type="entry name" value="2-HYDROXYACID DEHYDROGENASE HOMOLOG 1-RELATED"/>
    <property type="match status" value="1"/>
</dbReference>
<dbReference type="PANTHER" id="PTHR43026:SF1">
    <property type="entry name" value="2-HYDROXYACID DEHYDROGENASE HOMOLOG 1-RELATED"/>
    <property type="match status" value="1"/>
</dbReference>
<dbReference type="Pfam" id="PF00389">
    <property type="entry name" value="2-Hacid_dh"/>
    <property type="match status" value="1"/>
</dbReference>
<dbReference type="Pfam" id="PF02826">
    <property type="entry name" value="2-Hacid_dh_C"/>
    <property type="match status" value="1"/>
</dbReference>
<dbReference type="SUPFAM" id="SSF52283">
    <property type="entry name" value="Formate/glycerate dehydrogenase catalytic domain-like"/>
    <property type="match status" value="1"/>
</dbReference>
<dbReference type="SUPFAM" id="SSF51735">
    <property type="entry name" value="NAD(P)-binding Rossmann-fold domains"/>
    <property type="match status" value="1"/>
</dbReference>
<dbReference type="PROSITE" id="PS00065">
    <property type="entry name" value="D_2_HYDROXYACID_DH_1"/>
    <property type="match status" value="1"/>
</dbReference>
<dbReference type="PROSITE" id="PS00670">
    <property type="entry name" value="D_2_HYDROXYACID_DH_2"/>
    <property type="match status" value="1"/>
</dbReference>
<dbReference type="PROSITE" id="PS00671">
    <property type="entry name" value="D_2_HYDROXYACID_DH_3"/>
    <property type="match status" value="1"/>
</dbReference>
<proteinExistence type="inferred from homology"/>
<comment type="catalytic activity">
    <reaction>
        <text>(R)-lactate + NAD(+) = pyruvate + NADH + H(+)</text>
        <dbReference type="Rhea" id="RHEA:16369"/>
        <dbReference type="ChEBI" id="CHEBI:15361"/>
        <dbReference type="ChEBI" id="CHEBI:15378"/>
        <dbReference type="ChEBI" id="CHEBI:16004"/>
        <dbReference type="ChEBI" id="CHEBI:57540"/>
        <dbReference type="ChEBI" id="CHEBI:57945"/>
        <dbReference type="EC" id="1.1.1.28"/>
    </reaction>
</comment>
<comment type="similarity">
    <text evidence="3">Belongs to the D-isomer specific 2-hydroxyacid dehydrogenase family.</text>
</comment>
<gene>
    <name type="primary">ldhD</name>
    <name type="synonym">ddh</name>
    <name type="ordered locus">SAS2410</name>
</gene>